<sequence>MTTIVSVRRNNKVVIAGDGQVSLGNTVMKGNARKVRRLYNNKVLAGFAGGTADAFTLFERFESKLQMHQGHLTKAAVELAKDWRSDRALRKLEALLAVADETASLIITGNGDVVQPENDLIAIGSGGAYAQAAATALLENTELDAREIAEKALNIAGDICVFTNHNHTIEELEIPAELPNLSQA</sequence>
<name>HSLV_VIBVU</name>
<organism>
    <name type="scientific">Vibrio vulnificus (strain CMCP6)</name>
    <dbReference type="NCBI Taxonomy" id="216895"/>
    <lineage>
        <taxon>Bacteria</taxon>
        <taxon>Pseudomonadati</taxon>
        <taxon>Pseudomonadota</taxon>
        <taxon>Gammaproteobacteria</taxon>
        <taxon>Vibrionales</taxon>
        <taxon>Vibrionaceae</taxon>
        <taxon>Vibrio</taxon>
    </lineage>
</organism>
<reference key="1">
    <citation type="submission" date="2002-12" db="EMBL/GenBank/DDBJ databases">
        <title>Complete genome sequence of Vibrio vulnificus CMCP6.</title>
        <authorList>
            <person name="Rhee J.H."/>
            <person name="Kim S.Y."/>
            <person name="Chung S.S."/>
            <person name="Kim J.J."/>
            <person name="Moon Y.H."/>
            <person name="Jeong H."/>
            <person name="Choy H.E."/>
        </authorList>
    </citation>
    <scope>NUCLEOTIDE SEQUENCE [LARGE SCALE GENOMIC DNA]</scope>
    <source>
        <strain>CMCP6</strain>
    </source>
</reference>
<evidence type="ECO:0000250" key="1"/>
<evidence type="ECO:0000255" key="2">
    <source>
        <dbReference type="HAMAP-Rule" id="MF_00248"/>
    </source>
</evidence>
<protein>
    <recommendedName>
        <fullName evidence="2">ATP-dependent protease subunit HslV</fullName>
        <ecNumber evidence="2">3.4.25.2</ecNumber>
    </recommendedName>
</protein>
<comment type="function">
    <text evidence="2">Protease subunit of a proteasome-like degradation complex believed to be a general protein degrading machinery.</text>
</comment>
<comment type="catalytic activity">
    <reaction evidence="2">
        <text>ATP-dependent cleavage of peptide bonds with broad specificity.</text>
        <dbReference type="EC" id="3.4.25.2"/>
    </reaction>
</comment>
<comment type="activity regulation">
    <text evidence="2">Allosterically activated by HslU binding.</text>
</comment>
<comment type="subunit">
    <text evidence="2">A double ring-shaped homohexamer of HslV is capped on each side by a ring-shaped HslU homohexamer. The assembly of the HslU/HslV complex is dependent on binding of ATP.</text>
</comment>
<comment type="subcellular location">
    <subcellularLocation>
        <location evidence="2">Cytoplasm</location>
    </subcellularLocation>
</comment>
<comment type="similarity">
    <text evidence="2">Belongs to the peptidase T1B family. HslV subfamily.</text>
</comment>
<dbReference type="EC" id="3.4.25.2" evidence="2"/>
<dbReference type="EMBL" id="AE016795">
    <property type="protein sequence ID" value="AAO09807.1"/>
    <property type="molecule type" value="Genomic_DNA"/>
</dbReference>
<dbReference type="RefSeq" id="WP_011079332.1">
    <property type="nucleotide sequence ID" value="NC_004459.3"/>
</dbReference>
<dbReference type="SMR" id="Q8DCP3"/>
<dbReference type="MEROPS" id="T01.006"/>
<dbReference type="KEGG" id="vvu:VV1_1356"/>
<dbReference type="HOGENOM" id="CLU_093872_1_0_6"/>
<dbReference type="Proteomes" id="UP000002275">
    <property type="component" value="Chromosome 1"/>
</dbReference>
<dbReference type="GO" id="GO:0009376">
    <property type="term" value="C:HslUV protease complex"/>
    <property type="evidence" value="ECO:0007669"/>
    <property type="project" value="UniProtKB-UniRule"/>
</dbReference>
<dbReference type="GO" id="GO:0005839">
    <property type="term" value="C:proteasome core complex"/>
    <property type="evidence" value="ECO:0007669"/>
    <property type="project" value="InterPro"/>
</dbReference>
<dbReference type="GO" id="GO:0046872">
    <property type="term" value="F:metal ion binding"/>
    <property type="evidence" value="ECO:0007669"/>
    <property type="project" value="UniProtKB-KW"/>
</dbReference>
<dbReference type="GO" id="GO:0004298">
    <property type="term" value="F:threonine-type endopeptidase activity"/>
    <property type="evidence" value="ECO:0007669"/>
    <property type="project" value="UniProtKB-KW"/>
</dbReference>
<dbReference type="GO" id="GO:0051603">
    <property type="term" value="P:proteolysis involved in protein catabolic process"/>
    <property type="evidence" value="ECO:0007669"/>
    <property type="project" value="InterPro"/>
</dbReference>
<dbReference type="CDD" id="cd01913">
    <property type="entry name" value="protease_HslV"/>
    <property type="match status" value="1"/>
</dbReference>
<dbReference type="FunFam" id="3.60.20.10:FF:000002">
    <property type="entry name" value="ATP-dependent protease subunit HslV"/>
    <property type="match status" value="1"/>
</dbReference>
<dbReference type="Gene3D" id="3.60.20.10">
    <property type="entry name" value="Glutamine Phosphoribosylpyrophosphate, subunit 1, domain 1"/>
    <property type="match status" value="1"/>
</dbReference>
<dbReference type="HAMAP" id="MF_00248">
    <property type="entry name" value="HslV"/>
    <property type="match status" value="1"/>
</dbReference>
<dbReference type="InterPro" id="IPR022281">
    <property type="entry name" value="ATP-dep_Prtase_HsIV_su"/>
</dbReference>
<dbReference type="InterPro" id="IPR029055">
    <property type="entry name" value="Ntn_hydrolases_N"/>
</dbReference>
<dbReference type="InterPro" id="IPR001353">
    <property type="entry name" value="Proteasome_sua/b"/>
</dbReference>
<dbReference type="InterPro" id="IPR023333">
    <property type="entry name" value="Proteasome_suB-type"/>
</dbReference>
<dbReference type="NCBIfam" id="TIGR03692">
    <property type="entry name" value="ATP_dep_HslV"/>
    <property type="match status" value="1"/>
</dbReference>
<dbReference type="NCBIfam" id="NF003964">
    <property type="entry name" value="PRK05456.1"/>
    <property type="match status" value="1"/>
</dbReference>
<dbReference type="PANTHER" id="PTHR32194:SF0">
    <property type="entry name" value="ATP-DEPENDENT PROTEASE SUBUNIT HSLV"/>
    <property type="match status" value="1"/>
</dbReference>
<dbReference type="PANTHER" id="PTHR32194">
    <property type="entry name" value="METALLOPROTEASE TLDD"/>
    <property type="match status" value="1"/>
</dbReference>
<dbReference type="Pfam" id="PF00227">
    <property type="entry name" value="Proteasome"/>
    <property type="match status" value="1"/>
</dbReference>
<dbReference type="PIRSF" id="PIRSF039093">
    <property type="entry name" value="HslV"/>
    <property type="match status" value="1"/>
</dbReference>
<dbReference type="SUPFAM" id="SSF56235">
    <property type="entry name" value="N-terminal nucleophile aminohydrolases (Ntn hydrolases)"/>
    <property type="match status" value="1"/>
</dbReference>
<dbReference type="PROSITE" id="PS51476">
    <property type="entry name" value="PROTEASOME_BETA_2"/>
    <property type="match status" value="1"/>
</dbReference>
<feature type="initiator methionine" description="Removed" evidence="1">
    <location>
        <position position="1"/>
    </location>
</feature>
<feature type="chain" id="PRO_0000148159" description="ATP-dependent protease subunit HslV">
    <location>
        <begin position="2"/>
        <end position="184"/>
    </location>
</feature>
<feature type="active site" evidence="2">
    <location>
        <position position="2"/>
    </location>
</feature>
<feature type="binding site" evidence="2">
    <location>
        <position position="157"/>
    </location>
    <ligand>
        <name>Na(+)</name>
        <dbReference type="ChEBI" id="CHEBI:29101"/>
    </ligand>
</feature>
<feature type="binding site" evidence="2">
    <location>
        <position position="160"/>
    </location>
    <ligand>
        <name>Na(+)</name>
        <dbReference type="ChEBI" id="CHEBI:29101"/>
    </ligand>
</feature>
<feature type="binding site" evidence="2">
    <location>
        <position position="163"/>
    </location>
    <ligand>
        <name>Na(+)</name>
        <dbReference type="ChEBI" id="CHEBI:29101"/>
    </ligand>
</feature>
<keyword id="KW-0021">Allosteric enzyme</keyword>
<keyword id="KW-0963">Cytoplasm</keyword>
<keyword id="KW-0378">Hydrolase</keyword>
<keyword id="KW-0479">Metal-binding</keyword>
<keyword id="KW-0645">Protease</keyword>
<keyword id="KW-0915">Sodium</keyword>
<keyword id="KW-0888">Threonine protease</keyword>
<accession>Q8DCP3</accession>
<proteinExistence type="inferred from homology"/>
<gene>
    <name evidence="2" type="primary">hslV</name>
    <name type="ordered locus">VV1_1356</name>
</gene>